<protein>
    <recommendedName>
        <fullName evidence="17">Hexokinase-2</fullName>
        <ecNumber evidence="5 6 7">2.7.1.1</ecNumber>
    </recommendedName>
    <alternativeName>
        <fullName evidence="15 16">Hexokinase type II</fullName>
        <shortName evidence="15 16">HK II</shortName>
    </alternativeName>
    <alternativeName>
        <fullName evidence="2">Hexokinase-B</fullName>
    </alternativeName>
    <alternativeName>
        <fullName evidence="15">Muscle form hexokinase</fullName>
    </alternativeName>
</protein>
<reference key="1">
    <citation type="journal article" date="1993" name="Biochem. Biophys. Res. Commun.">
        <title>Human hexokinase II: sequence and homology to other hexokinases.</title>
        <authorList>
            <person name="Deeb S.S."/>
            <person name="Malkki M."/>
            <person name="Laakso M."/>
        </authorList>
    </citation>
    <scope>NUCLEOTIDE SEQUENCE [MRNA]</scope>
    <scope>TISSUE SPECIFICITY</scope>
    <source>
        <tissue>Skeletal muscle</tissue>
    </source>
</reference>
<reference key="2">
    <citation type="journal article" date="1995" name="Diabetologia">
        <title>Human hexokinase II gene: exon-intron organization, mutation screening in NIDDM, and its relationship to muscle hexokinase activity.</title>
        <authorList>
            <person name="Lehto M."/>
            <person name="Huang X."/>
            <person name="Davis E.M."/>
            <person name="Le Beau M.M."/>
            <person name="Laurila E."/>
            <person name="Eriksson K.F."/>
            <person name="Bell G.I."/>
            <person name="Groop L.C."/>
        </authorList>
    </citation>
    <scope>NUCLEOTIDE SEQUENCE [GENOMIC DNA]</scope>
    <scope>VARIANT HIS-142</scope>
    <source>
        <tissue>Blood</tissue>
        <tissue>Muscle</tissue>
        <tissue>Placenta</tissue>
    </source>
</reference>
<reference key="3">
    <citation type="submission" date="1999-05" db="EMBL/GenBank/DDBJ databases">
        <authorList>
            <person name="Malkki M."/>
            <person name="Heikkinen S."/>
            <person name="Deeb S.S."/>
            <person name="Laakso M."/>
        </authorList>
    </citation>
    <scope>NUCLEOTIDE SEQUENCE [MRNA]</scope>
    <source>
        <tissue>Skeletal muscle</tissue>
    </source>
</reference>
<reference key="4">
    <citation type="submission" date="2004-05" db="EMBL/GenBank/DDBJ databases">
        <authorList>
            <consortium name="NIEHS SNPs program"/>
        </authorList>
    </citation>
    <scope>NUCLEOTIDE SEQUENCE [GENOMIC DNA]</scope>
    <scope>VARIANTS HIS-142; CYS-274; PRO-314; ILE-331; SER-387; GLN-801; LYS-844 AND ASN-881</scope>
</reference>
<reference key="5">
    <citation type="submission" date="2005-09" db="EMBL/GenBank/DDBJ databases">
        <authorList>
            <person name="Mural R.J."/>
            <person name="Istrail S."/>
            <person name="Sutton G.G."/>
            <person name="Florea L."/>
            <person name="Halpern A.L."/>
            <person name="Mobarry C.M."/>
            <person name="Lippert R."/>
            <person name="Walenz B."/>
            <person name="Shatkay H."/>
            <person name="Dew I."/>
            <person name="Miller J.R."/>
            <person name="Flanigan M.J."/>
            <person name="Edwards N.J."/>
            <person name="Bolanos R."/>
            <person name="Fasulo D."/>
            <person name="Halldorsson B.V."/>
            <person name="Hannenhalli S."/>
            <person name="Turner R."/>
            <person name="Yooseph S."/>
            <person name="Lu F."/>
            <person name="Nusskern D.R."/>
            <person name="Shue B.C."/>
            <person name="Zheng X.H."/>
            <person name="Zhong F."/>
            <person name="Delcher A.L."/>
            <person name="Huson D.H."/>
            <person name="Kravitz S.A."/>
            <person name="Mouchard L."/>
            <person name="Reinert K."/>
            <person name="Remington K.A."/>
            <person name="Clark A.G."/>
            <person name="Waterman M.S."/>
            <person name="Eichler E.E."/>
            <person name="Adams M.D."/>
            <person name="Hunkapiller M.W."/>
            <person name="Myers E.W."/>
            <person name="Venter J.C."/>
        </authorList>
    </citation>
    <scope>NUCLEOTIDE SEQUENCE [LARGE SCALE GENOMIC DNA]</scope>
</reference>
<reference key="6">
    <citation type="journal article" date="2004" name="Genome Res.">
        <title>The status, quality, and expansion of the NIH full-length cDNA project: the Mammalian Gene Collection (MGC).</title>
        <authorList>
            <consortium name="The MGC Project Team"/>
        </authorList>
    </citation>
    <scope>NUCLEOTIDE SEQUENCE [LARGE SCALE MRNA]</scope>
    <source>
        <tissue>Placenta</tissue>
        <tissue>Testis</tissue>
    </source>
</reference>
<reference key="7">
    <citation type="journal article" date="1994" name="Cancer Lett.">
        <title>Steady state transcript levels of the type II hexokinase and type 1 glucose transporter in human tumor cell lines.</title>
        <authorList>
            <person name="Shinohara Y."/>
            <person name="Yamamoto K."/>
            <person name="Kogure K."/>
            <person name="Ichihara J."/>
            <person name="Terada H."/>
        </authorList>
    </citation>
    <scope>NUCLEOTIDE SEQUENCE [GENOMIC DNA] OF 614-739</scope>
</reference>
<reference key="8">
    <citation type="journal article" date="2008" name="PLoS ONE">
        <title>Hexokinase II detachment from mitochondria triggers apoptosis through the permeability transition pore independent of voltage-dependent anion channels.</title>
        <authorList>
            <person name="Chiara F."/>
            <person name="Castellaro D."/>
            <person name="Marin O."/>
            <person name="Petronilli V."/>
            <person name="Brusilow W.S."/>
            <person name="Juhaszova M."/>
            <person name="Sollott S.J."/>
            <person name="Forte M."/>
            <person name="Bernardi P."/>
            <person name="Rasola A."/>
        </authorList>
    </citation>
    <scope>FUNCTION</scope>
    <scope>SUBCELLULAR LOCATION</scope>
</reference>
<reference key="9">
    <citation type="journal article" date="2011" name="BMC Syst. Biol.">
        <title>Initial characterization of the human central proteome.</title>
        <authorList>
            <person name="Burkard T.R."/>
            <person name="Planyavsky M."/>
            <person name="Kaupe I."/>
            <person name="Breitwieser F.P."/>
            <person name="Buerckstuemmer T."/>
            <person name="Bennett K.L."/>
            <person name="Superti-Furga G."/>
            <person name="Colinge J."/>
        </authorList>
    </citation>
    <scope>IDENTIFICATION BY MASS SPECTROMETRY [LARGE SCALE ANALYSIS]</scope>
</reference>
<reference key="10">
    <citation type="journal article" date="2012" name="Proc. Natl. Acad. Sci. U.S.A.">
        <title>Mitochondrial localization of TIGAR under hypoxia stimulates HK2 and lowers ROS and cell death.</title>
        <authorList>
            <person name="Cheung E.C."/>
            <person name="Ludwig R.L."/>
            <person name="Vousden K.H."/>
        </authorList>
    </citation>
    <scope>FUNCTION</scope>
    <scope>CATALYTIC ACTIVITY</scope>
    <scope>INTERACTION WITH TIGAR</scope>
</reference>
<reference key="11">
    <citation type="journal article" date="2015" name="Proteomics">
        <title>N-terminome analysis of the human mitochondrial proteome.</title>
        <authorList>
            <person name="Vaca Jacome A.S."/>
            <person name="Rabilloud T."/>
            <person name="Schaeffer-Reiss C."/>
            <person name="Rompais M."/>
            <person name="Ayoub D."/>
            <person name="Lane L."/>
            <person name="Bairoch A."/>
            <person name="Van Dorsselaer A."/>
            <person name="Carapito C."/>
        </authorList>
    </citation>
    <scope>ACETYLATION [LARGE SCALE ANALYSIS] AT MET-1</scope>
    <scope>IDENTIFICATION BY MASS SPECTROMETRY [LARGE SCALE ANALYSIS]</scope>
</reference>
<reference evidence="21 22 23" key="12">
    <citation type="journal article" date="2016" name="ACS Med. Chem. Lett.">
        <title>Discovery of a novel 2,6-disubstituted glucosamine series of potent and selective hexokinase 2 inhibitors.</title>
        <authorList>
            <person name="Lin H."/>
            <person name="Zeng J."/>
            <person name="Xie R."/>
            <person name="Schulz M.J."/>
            <person name="Tedesco R."/>
            <person name="Qu J."/>
            <person name="Erhard K.F."/>
            <person name="Mack J.F."/>
            <person name="Raha K."/>
            <person name="Rendina A.R."/>
            <person name="Szewczuk L.M."/>
            <person name="Kratz P.M."/>
            <person name="Jurewicz A.J."/>
            <person name="Cecconie T."/>
            <person name="Martens S."/>
            <person name="McDevitt P.J."/>
            <person name="Martin J.D."/>
            <person name="Chen S.B."/>
            <person name="Jiang Y."/>
            <person name="Nickels L."/>
            <person name="Schwartz B.J."/>
            <person name="Smallwood A."/>
            <person name="Zhao B."/>
            <person name="Campobasso N."/>
            <person name="Qian Y."/>
            <person name="Briand J."/>
            <person name="Rominger C.M."/>
            <person name="Oleykowski C."/>
            <person name="Hardwicke M.A."/>
            <person name="Luengo J.I."/>
        </authorList>
    </citation>
    <scope>X-RAY CRYSTALLOGRAPHY (2.73 ANGSTROMS) OF 17-917 IN COMPLEX WITH GLUCOSE-6-PHOSPHATE</scope>
    <scope>FUNCTION</scope>
    <scope>CATALYTIC ACTIVITY</scope>
    <scope>ACTIVITY REGULATION</scope>
</reference>
<reference key="13">
    <citation type="journal article" date="2018" name="Biosci. Rep.">
        <title>The catalytic inactivation of the N-half of human hexokinase 2 and structural and biochemical characterization of its mitochondrial conformation.</title>
        <authorList>
            <person name="Nawaz M.H."/>
            <person name="Ferreira J.C."/>
            <person name="Nedyalkova L."/>
            <person name="Zhu H."/>
            <person name="Carrasco-Lopez C."/>
            <person name="Kirmizialtin S."/>
            <person name="Rabeh W.M."/>
        </authorList>
    </citation>
    <scope>X-RAY CRYSTALLOGRAPHY (2.45 ANGSTROMS) OF 17-916 IN COMPLEX WITH GLUCOSE AND GLUCOSE-6-PHOSPHATE</scope>
    <scope>FUNCTION</scope>
    <scope>CATALYTIC ACTIVITY</scope>
    <scope>BIOPHYSICOCHEMICAL PROPERTIES</scope>
    <scope>SUBCELLULAR LOCATION</scope>
    <scope>DOMAIN</scope>
    <scope>MUTAGENESIS OF ASP-209; ARG-468 AND ASP-657</scope>
</reference>
<reference key="14">
    <citation type="journal article" date="1995" name="Diabetes">
        <title>Amino acid substitutions in hexokinase II among patients with NIDDM.</title>
        <authorList>
            <person name="Laakso M."/>
            <person name="Malkki M."/>
            <person name="Deeb S.S."/>
        </authorList>
    </citation>
    <scope>VARIANTS VAL-314; CYS-353 AND GLN-775</scope>
</reference>
<reference key="15">
    <citation type="journal article" date="1995" name="Diabetes">
        <title>Analysis of the hexokinase II gene in subjects with insulin resistance and NIDDM and detection of a Gln142--&gt;His substitution.</title>
        <authorList>
            <person name="Vidal-Puig A."/>
            <person name="Printz R.L."/>
            <person name="Stratton I.M."/>
            <person name="Granner D.K."/>
            <person name="Moller D.E."/>
        </authorList>
    </citation>
    <scope>VARIANT HIS-142</scope>
</reference>
<reference key="16">
    <citation type="journal article" date="1995" name="Diabetes">
        <title>Identification of four amino acid substitutions in hexokinase II and studies of relationships to NIDDM, glucose effectiveness, and insulin sensitivity.</title>
        <authorList>
            <person name="Echwald S.M."/>
            <person name="Bjoerbaek C."/>
            <person name="Hansen T."/>
            <person name="Clausen J.O."/>
            <person name="Vestergaard H."/>
            <person name="Zierath J.R."/>
            <person name="Printz R.L."/>
            <person name="Granner D.K."/>
            <person name="Pedersen O."/>
        </authorList>
    </citation>
    <scope>VARIANTS HIS-142; PHE-148; GLN-497 AND LYS-844</scope>
</reference>
<evidence type="ECO:0000250" key="1">
    <source>
        <dbReference type="UniProtKB" id="P19367"/>
    </source>
</evidence>
<evidence type="ECO:0000250" key="2">
    <source>
        <dbReference type="UniProtKB" id="P27881"/>
    </source>
</evidence>
<evidence type="ECO:0000255" key="3">
    <source>
        <dbReference type="PROSITE-ProRule" id="PRU01084"/>
    </source>
</evidence>
<evidence type="ECO:0000269" key="4">
    <source>
    </source>
</evidence>
<evidence type="ECO:0000269" key="5">
    <source>
    </source>
</evidence>
<evidence type="ECO:0000269" key="6">
    <source>
    </source>
</evidence>
<evidence type="ECO:0000269" key="7">
    <source>
    </source>
</evidence>
<evidence type="ECO:0000269" key="8">
    <source>
    </source>
</evidence>
<evidence type="ECO:0000269" key="9">
    <source>
    </source>
</evidence>
<evidence type="ECO:0000269" key="10">
    <source>
    </source>
</evidence>
<evidence type="ECO:0000269" key="11">
    <source>
    </source>
</evidence>
<evidence type="ECO:0000269" key="12">
    <source>
    </source>
</evidence>
<evidence type="ECO:0000269" key="13">
    <source ref="4"/>
</evidence>
<evidence type="ECO:0000303" key="14">
    <source>
    </source>
</evidence>
<evidence type="ECO:0000303" key="15">
    <source>
    </source>
</evidence>
<evidence type="ECO:0000303" key="16">
    <source>
    </source>
</evidence>
<evidence type="ECO:0000305" key="17"/>
<evidence type="ECO:0000305" key="18">
    <source>
    </source>
</evidence>
<evidence type="ECO:0000312" key="19">
    <source>
        <dbReference type="HGNC" id="HGNC:4923"/>
    </source>
</evidence>
<evidence type="ECO:0007744" key="20">
    <source>
        <dbReference type="PDB" id="2NZT"/>
    </source>
</evidence>
<evidence type="ECO:0007744" key="21">
    <source>
        <dbReference type="PDB" id="5HEX"/>
    </source>
</evidence>
<evidence type="ECO:0007744" key="22">
    <source>
        <dbReference type="PDB" id="5HFU"/>
    </source>
</evidence>
<evidence type="ECO:0007744" key="23">
    <source>
        <dbReference type="PDB" id="5HG1"/>
    </source>
</evidence>
<evidence type="ECO:0007744" key="24">
    <source>
    </source>
</evidence>
<evidence type="ECO:0007829" key="25">
    <source>
        <dbReference type="PDB" id="2NZT"/>
    </source>
</evidence>
<evidence type="ECO:0007829" key="26">
    <source>
        <dbReference type="PDB" id="5HEX"/>
    </source>
</evidence>
<evidence type="ECO:0007829" key="27">
    <source>
        <dbReference type="PDB" id="5HFU"/>
    </source>
</evidence>
<evidence type="ECO:0007829" key="28">
    <source>
        <dbReference type="PDB" id="5HG1"/>
    </source>
</evidence>
<dbReference type="EC" id="2.7.1.1" evidence="5 6 7"/>
<dbReference type="EMBL" id="Z46376">
    <property type="protein sequence ID" value="CAA86511.1"/>
    <property type="molecule type" value="mRNA"/>
</dbReference>
<dbReference type="EMBL" id="Z46354">
    <property type="protein sequence ID" value="CAA86476.2"/>
    <property type="molecule type" value="Genomic_DNA"/>
</dbReference>
<dbReference type="EMBL" id="Z46355">
    <property type="protein sequence ID" value="CAA86476.2"/>
    <property type="status" value="JOINED"/>
    <property type="molecule type" value="Genomic_DNA"/>
</dbReference>
<dbReference type="EMBL" id="Z46604">
    <property type="protein sequence ID" value="CAA86476.2"/>
    <property type="status" value="JOINED"/>
    <property type="molecule type" value="Genomic_DNA"/>
</dbReference>
<dbReference type="EMBL" id="Z46356">
    <property type="protein sequence ID" value="CAA86476.2"/>
    <property type="status" value="JOINED"/>
    <property type="molecule type" value="Genomic_DNA"/>
</dbReference>
<dbReference type="EMBL" id="Z46357">
    <property type="protein sequence ID" value="CAA86476.2"/>
    <property type="status" value="JOINED"/>
    <property type="molecule type" value="Genomic_DNA"/>
</dbReference>
<dbReference type="EMBL" id="Z46358">
    <property type="protein sequence ID" value="CAA86476.2"/>
    <property type="status" value="JOINED"/>
    <property type="molecule type" value="Genomic_DNA"/>
</dbReference>
<dbReference type="EMBL" id="Z46359">
    <property type="protein sequence ID" value="CAA86476.2"/>
    <property type="status" value="JOINED"/>
    <property type="molecule type" value="Genomic_DNA"/>
</dbReference>
<dbReference type="EMBL" id="Z46360">
    <property type="protein sequence ID" value="CAA86476.2"/>
    <property type="status" value="JOINED"/>
    <property type="molecule type" value="Genomic_DNA"/>
</dbReference>
<dbReference type="EMBL" id="Z46361">
    <property type="protein sequence ID" value="CAA86476.2"/>
    <property type="status" value="JOINED"/>
    <property type="molecule type" value="Genomic_DNA"/>
</dbReference>
<dbReference type="EMBL" id="Z46362">
    <property type="protein sequence ID" value="CAA86476.2"/>
    <property type="status" value="JOINED"/>
    <property type="molecule type" value="Genomic_DNA"/>
</dbReference>
<dbReference type="EMBL" id="Z46363">
    <property type="protein sequence ID" value="CAA86476.2"/>
    <property type="status" value="JOINED"/>
    <property type="molecule type" value="Genomic_DNA"/>
</dbReference>
<dbReference type="EMBL" id="Z46364">
    <property type="protein sequence ID" value="CAA86476.2"/>
    <property type="status" value="JOINED"/>
    <property type="molecule type" value="Genomic_DNA"/>
</dbReference>
<dbReference type="EMBL" id="Z46365">
    <property type="protein sequence ID" value="CAA86476.2"/>
    <property type="status" value="JOINED"/>
    <property type="molecule type" value="Genomic_DNA"/>
</dbReference>
<dbReference type="EMBL" id="Z46366">
    <property type="protein sequence ID" value="CAA86476.2"/>
    <property type="status" value="JOINED"/>
    <property type="molecule type" value="Genomic_DNA"/>
</dbReference>
<dbReference type="EMBL" id="Z46367">
    <property type="protein sequence ID" value="CAA86476.2"/>
    <property type="status" value="JOINED"/>
    <property type="molecule type" value="Genomic_DNA"/>
</dbReference>
<dbReference type="EMBL" id="Z46368">
    <property type="protein sequence ID" value="CAA86476.2"/>
    <property type="status" value="JOINED"/>
    <property type="molecule type" value="Genomic_DNA"/>
</dbReference>
<dbReference type="EMBL" id="Z46369">
    <property type="protein sequence ID" value="CAA86476.2"/>
    <property type="status" value="JOINED"/>
    <property type="molecule type" value="Genomic_DNA"/>
</dbReference>
<dbReference type="EMBL" id="AF148513">
    <property type="protein sequence ID" value="AAD30174.1"/>
    <property type="molecule type" value="mRNA"/>
</dbReference>
<dbReference type="EMBL" id="AY623118">
    <property type="protein sequence ID" value="AAT38114.1"/>
    <property type="molecule type" value="Genomic_DNA"/>
</dbReference>
<dbReference type="EMBL" id="CH471053">
    <property type="protein sequence ID" value="EAW99601.1"/>
    <property type="molecule type" value="Genomic_DNA"/>
</dbReference>
<dbReference type="EMBL" id="CH471053">
    <property type="protein sequence ID" value="EAW99602.1"/>
    <property type="molecule type" value="Genomic_DNA"/>
</dbReference>
<dbReference type="EMBL" id="BC021116">
    <property type="protein sequence ID" value="AAH21116.1"/>
    <property type="molecule type" value="mRNA"/>
</dbReference>
<dbReference type="EMBL" id="BC064369">
    <property type="protein sequence ID" value="AAH64369.1"/>
    <property type="molecule type" value="mRNA"/>
</dbReference>
<dbReference type="EMBL" id="D25412">
    <property type="protein sequence ID" value="BAA04999.1"/>
    <property type="molecule type" value="Genomic_DNA"/>
</dbReference>
<dbReference type="CCDS" id="CCDS1956.1"/>
<dbReference type="PIR" id="S48809">
    <property type="entry name" value="JC2025"/>
</dbReference>
<dbReference type="RefSeq" id="NP_000180.2">
    <property type="nucleotide sequence ID" value="NM_000189.4"/>
</dbReference>
<dbReference type="PDB" id="2NZT">
    <property type="method" value="X-ray"/>
    <property type="resolution" value="2.45 A"/>
    <property type="chains" value="A/B=17-916"/>
</dbReference>
<dbReference type="PDB" id="5HEX">
    <property type="method" value="X-ray"/>
    <property type="resolution" value="2.73 A"/>
    <property type="chains" value="A/B=17-917"/>
</dbReference>
<dbReference type="PDB" id="5HFU">
    <property type="method" value="X-ray"/>
    <property type="resolution" value="2.92 A"/>
    <property type="chains" value="A/B=17-917"/>
</dbReference>
<dbReference type="PDB" id="5HG1">
    <property type="method" value="X-ray"/>
    <property type="resolution" value="2.76 A"/>
    <property type="chains" value="A=17-916"/>
</dbReference>
<dbReference type="PDBsum" id="2NZT"/>
<dbReference type="PDBsum" id="5HEX"/>
<dbReference type="PDBsum" id="5HFU"/>
<dbReference type="PDBsum" id="5HG1"/>
<dbReference type="SMR" id="P52789"/>
<dbReference type="BioGRID" id="109346">
    <property type="interactions" value="163"/>
</dbReference>
<dbReference type="DIP" id="DIP-50110N"/>
<dbReference type="FunCoup" id="P52789">
    <property type="interactions" value="936"/>
</dbReference>
<dbReference type="IntAct" id="P52789">
    <property type="interactions" value="68"/>
</dbReference>
<dbReference type="MINT" id="P52789"/>
<dbReference type="STRING" id="9606.ENSP00000290573"/>
<dbReference type="BindingDB" id="P52789"/>
<dbReference type="ChEMBL" id="CHEMBL2640"/>
<dbReference type="DrugCentral" id="P52789"/>
<dbReference type="GlyGen" id="P52789">
    <property type="glycosylation" value="2 sites, 1 O-linked glycan (2 sites)"/>
</dbReference>
<dbReference type="iPTMnet" id="P52789"/>
<dbReference type="MetOSite" id="P52789"/>
<dbReference type="PhosphoSitePlus" id="P52789"/>
<dbReference type="SwissPalm" id="P52789"/>
<dbReference type="BioMuta" id="HK2"/>
<dbReference type="DMDM" id="56405344"/>
<dbReference type="jPOST" id="P52789"/>
<dbReference type="MassIVE" id="P52789"/>
<dbReference type="PaxDb" id="9606-ENSP00000290573"/>
<dbReference type="PeptideAtlas" id="P52789"/>
<dbReference type="ProteomicsDB" id="56533"/>
<dbReference type="Pumba" id="P52789"/>
<dbReference type="Antibodypedia" id="31617">
    <property type="antibodies" value="702 antibodies from 38 providers"/>
</dbReference>
<dbReference type="DNASU" id="3099"/>
<dbReference type="Ensembl" id="ENST00000290573.7">
    <property type="protein sequence ID" value="ENSP00000290573.2"/>
    <property type="gene ID" value="ENSG00000159399.10"/>
</dbReference>
<dbReference type="GeneID" id="3099"/>
<dbReference type="KEGG" id="hsa:3099"/>
<dbReference type="MANE-Select" id="ENST00000290573.7">
    <property type="protein sequence ID" value="ENSP00000290573.2"/>
    <property type="RefSeq nucleotide sequence ID" value="NM_000189.5"/>
    <property type="RefSeq protein sequence ID" value="NP_000180.2"/>
</dbReference>
<dbReference type="UCSC" id="uc002snd.4">
    <property type="organism name" value="human"/>
</dbReference>
<dbReference type="AGR" id="HGNC:4923"/>
<dbReference type="CTD" id="3099"/>
<dbReference type="DisGeNET" id="3099"/>
<dbReference type="GeneCards" id="HK2"/>
<dbReference type="HGNC" id="HGNC:4923">
    <property type="gene designation" value="HK2"/>
</dbReference>
<dbReference type="HPA" id="ENSG00000159399">
    <property type="expression patterns" value="Tissue enhanced (retina)"/>
</dbReference>
<dbReference type="MIM" id="601125">
    <property type="type" value="gene"/>
</dbReference>
<dbReference type="neXtProt" id="NX_P52789"/>
<dbReference type="OpenTargets" id="ENSG00000159399"/>
<dbReference type="PharmGKB" id="PA29301"/>
<dbReference type="VEuPathDB" id="HostDB:ENSG00000159399"/>
<dbReference type="eggNOG" id="KOG1369">
    <property type="taxonomic scope" value="Eukaryota"/>
</dbReference>
<dbReference type="GeneTree" id="ENSGT00950000182787"/>
<dbReference type="InParanoid" id="P52789"/>
<dbReference type="OMA" id="SYLVSWT"/>
<dbReference type="OrthoDB" id="419537at2759"/>
<dbReference type="PAN-GO" id="P52789">
    <property type="GO annotations" value="9 GO annotations based on evolutionary models"/>
</dbReference>
<dbReference type="PhylomeDB" id="P52789"/>
<dbReference type="TreeFam" id="TF314238"/>
<dbReference type="BioCyc" id="MetaCyc:HS08399-MONOMER"/>
<dbReference type="BRENDA" id="2.7.1.1">
    <property type="organism ID" value="2681"/>
</dbReference>
<dbReference type="PathwayCommons" id="P52789"/>
<dbReference type="Reactome" id="R-HSA-70171">
    <property type="pathway name" value="Glycolysis"/>
</dbReference>
<dbReference type="SABIO-RK" id="P52789"/>
<dbReference type="SignaLink" id="P52789"/>
<dbReference type="SIGNOR" id="P52789"/>
<dbReference type="UniPathway" id="UPA00109">
    <property type="reaction ID" value="UER00180"/>
</dbReference>
<dbReference type="UniPathway" id="UPA00242"/>
<dbReference type="BioGRID-ORCS" id="3099">
    <property type="hits" value="92 hits in 1170 CRISPR screens"/>
</dbReference>
<dbReference type="ChiTaRS" id="HK2">
    <property type="organism name" value="human"/>
</dbReference>
<dbReference type="EvolutionaryTrace" id="P52789"/>
<dbReference type="GeneWiki" id="HK2"/>
<dbReference type="GenomeRNAi" id="3099"/>
<dbReference type="Pharos" id="P52789">
    <property type="development level" value="Tchem"/>
</dbReference>
<dbReference type="PRO" id="PR:P52789"/>
<dbReference type="Proteomes" id="UP000005640">
    <property type="component" value="Chromosome 2"/>
</dbReference>
<dbReference type="RNAct" id="P52789">
    <property type="molecule type" value="protein"/>
</dbReference>
<dbReference type="Bgee" id="ENSG00000159399">
    <property type="expression patterns" value="Expressed in corpus epididymis and 200 other cell types or tissues"/>
</dbReference>
<dbReference type="ExpressionAtlas" id="P52789">
    <property type="expression patterns" value="baseline and differential"/>
</dbReference>
<dbReference type="GO" id="GO:0005813">
    <property type="term" value="C:centrosome"/>
    <property type="evidence" value="ECO:0000314"/>
    <property type="project" value="HPA"/>
</dbReference>
<dbReference type="GO" id="GO:0005829">
    <property type="term" value="C:cytosol"/>
    <property type="evidence" value="ECO:0000314"/>
    <property type="project" value="HPA"/>
</dbReference>
<dbReference type="GO" id="GO:0043231">
    <property type="term" value="C:intracellular membrane-bounded organelle"/>
    <property type="evidence" value="ECO:0000314"/>
    <property type="project" value="HPA"/>
</dbReference>
<dbReference type="GO" id="GO:0016020">
    <property type="term" value="C:membrane"/>
    <property type="evidence" value="ECO:0007005"/>
    <property type="project" value="UniProtKB"/>
</dbReference>
<dbReference type="GO" id="GO:0005741">
    <property type="term" value="C:mitochondrial outer membrane"/>
    <property type="evidence" value="ECO:0000314"/>
    <property type="project" value="MGI"/>
</dbReference>
<dbReference type="GO" id="GO:0005739">
    <property type="term" value="C:mitochondrion"/>
    <property type="evidence" value="ECO:0000314"/>
    <property type="project" value="HPA"/>
</dbReference>
<dbReference type="GO" id="GO:0016529">
    <property type="term" value="C:sarcoplasmic reticulum"/>
    <property type="evidence" value="ECO:0007669"/>
    <property type="project" value="Ensembl"/>
</dbReference>
<dbReference type="GO" id="GO:0005524">
    <property type="term" value="F:ATP binding"/>
    <property type="evidence" value="ECO:0007669"/>
    <property type="project" value="UniProtKB-KW"/>
</dbReference>
<dbReference type="GO" id="GO:0005536">
    <property type="term" value="F:D-glucose binding"/>
    <property type="evidence" value="ECO:0007669"/>
    <property type="project" value="Ensembl"/>
</dbReference>
<dbReference type="GO" id="GO:0008865">
    <property type="term" value="F:fructokinase activity"/>
    <property type="evidence" value="ECO:0000250"/>
    <property type="project" value="UniProtKB"/>
</dbReference>
<dbReference type="GO" id="GO:0004340">
    <property type="term" value="F:glucokinase activity"/>
    <property type="evidence" value="ECO:0000314"/>
    <property type="project" value="UniProtKB"/>
</dbReference>
<dbReference type="GO" id="GO:0004396">
    <property type="term" value="F:hexokinase activity"/>
    <property type="evidence" value="ECO:0000314"/>
    <property type="project" value="UniProtKB"/>
</dbReference>
<dbReference type="GO" id="GO:0008637">
    <property type="term" value="P:apoptotic mitochondrial changes"/>
    <property type="evidence" value="ECO:0000314"/>
    <property type="project" value="MGI"/>
</dbReference>
<dbReference type="GO" id="GO:0061621">
    <property type="term" value="P:canonical glycolysis"/>
    <property type="evidence" value="ECO:0000314"/>
    <property type="project" value="UniProt"/>
</dbReference>
<dbReference type="GO" id="GO:1990830">
    <property type="term" value="P:cellular response to leukemia inhibitory factor"/>
    <property type="evidence" value="ECO:0007669"/>
    <property type="project" value="Ensembl"/>
</dbReference>
<dbReference type="GO" id="GO:0072655">
    <property type="term" value="P:establishment of protein localization to mitochondrion"/>
    <property type="evidence" value="ECO:0000315"/>
    <property type="project" value="ParkinsonsUK-UCL"/>
</dbReference>
<dbReference type="GO" id="GO:0006002">
    <property type="term" value="P:fructose 6-phosphate metabolic process"/>
    <property type="evidence" value="ECO:0000250"/>
    <property type="project" value="UniProtKB"/>
</dbReference>
<dbReference type="GO" id="GO:0051156">
    <property type="term" value="P:glucose 6-phosphate metabolic process"/>
    <property type="evidence" value="ECO:0000314"/>
    <property type="project" value="UniProtKB"/>
</dbReference>
<dbReference type="GO" id="GO:0006006">
    <property type="term" value="P:glucose metabolic process"/>
    <property type="evidence" value="ECO:0000318"/>
    <property type="project" value="GO_Central"/>
</dbReference>
<dbReference type="GO" id="GO:0006096">
    <property type="term" value="P:glycolytic process"/>
    <property type="evidence" value="ECO:0000318"/>
    <property type="project" value="GO_Central"/>
</dbReference>
<dbReference type="GO" id="GO:0001678">
    <property type="term" value="P:intracellular glucose homeostasis"/>
    <property type="evidence" value="ECO:0000318"/>
    <property type="project" value="GO_Central"/>
</dbReference>
<dbReference type="GO" id="GO:0007595">
    <property type="term" value="P:lactation"/>
    <property type="evidence" value="ECO:0007669"/>
    <property type="project" value="Ensembl"/>
</dbReference>
<dbReference type="GO" id="GO:0072656">
    <property type="term" value="P:maintenance of protein location in mitochondrion"/>
    <property type="evidence" value="ECO:0000315"/>
    <property type="project" value="ParkinsonsUK-UCL"/>
</dbReference>
<dbReference type="GO" id="GO:0035795">
    <property type="term" value="P:negative regulation of mitochondrial membrane permeability"/>
    <property type="evidence" value="ECO:0007669"/>
    <property type="project" value="Ensembl"/>
</dbReference>
<dbReference type="GO" id="GO:2000378">
    <property type="term" value="P:negative regulation of reactive oxygen species metabolic process"/>
    <property type="evidence" value="ECO:0007669"/>
    <property type="project" value="Ensembl"/>
</dbReference>
<dbReference type="GO" id="GO:0045766">
    <property type="term" value="P:positive regulation of angiogenesis"/>
    <property type="evidence" value="ECO:0000315"/>
    <property type="project" value="BHF-UCL"/>
</dbReference>
<dbReference type="GO" id="GO:1905091">
    <property type="term" value="P:positive regulation of type 2 mitophagy"/>
    <property type="evidence" value="ECO:0000315"/>
    <property type="project" value="ParkinsonsUK-UCL"/>
</dbReference>
<dbReference type="GO" id="GO:0046324">
    <property type="term" value="P:regulation of D-glucose import"/>
    <property type="evidence" value="ECO:0007669"/>
    <property type="project" value="Ensembl"/>
</dbReference>
<dbReference type="GO" id="GO:0001666">
    <property type="term" value="P:response to hypoxia"/>
    <property type="evidence" value="ECO:0007669"/>
    <property type="project" value="Ensembl"/>
</dbReference>
<dbReference type="GO" id="GO:0002931">
    <property type="term" value="P:response to ischemia"/>
    <property type="evidence" value="ECO:0007669"/>
    <property type="project" value="Ensembl"/>
</dbReference>
<dbReference type="CDD" id="cd24125">
    <property type="entry name" value="ASKHA_NBD_HK2_meta_rpt1"/>
    <property type="match status" value="1"/>
</dbReference>
<dbReference type="CDD" id="cd24128">
    <property type="entry name" value="ASKHA_NBD_HK2_meta_rpt2"/>
    <property type="match status" value="1"/>
</dbReference>
<dbReference type="FunFam" id="3.30.420.40:FF:000015">
    <property type="entry name" value="Hexokinase 1"/>
    <property type="match status" value="1"/>
</dbReference>
<dbReference type="FunFam" id="3.40.367.20:FF:000001">
    <property type="entry name" value="Hexokinase 1"/>
    <property type="match status" value="1"/>
</dbReference>
<dbReference type="FunFam" id="3.40.367.20:FF:000020">
    <property type="entry name" value="Hexokinase-1"/>
    <property type="match status" value="1"/>
</dbReference>
<dbReference type="FunFam" id="3.30.420.40:FF:000805">
    <property type="entry name" value="Hexokinase-2"/>
    <property type="match status" value="1"/>
</dbReference>
<dbReference type="Gene3D" id="3.30.420.40">
    <property type="match status" value="2"/>
</dbReference>
<dbReference type="Gene3D" id="3.40.367.20">
    <property type="match status" value="2"/>
</dbReference>
<dbReference type="InterPro" id="IPR043129">
    <property type="entry name" value="ATPase_NBD"/>
</dbReference>
<dbReference type="InterPro" id="IPR001312">
    <property type="entry name" value="Hexokinase"/>
</dbReference>
<dbReference type="InterPro" id="IPR019807">
    <property type="entry name" value="Hexokinase_BS"/>
</dbReference>
<dbReference type="InterPro" id="IPR022673">
    <property type="entry name" value="Hexokinase_C"/>
</dbReference>
<dbReference type="InterPro" id="IPR022672">
    <property type="entry name" value="Hexokinase_N"/>
</dbReference>
<dbReference type="PANTHER" id="PTHR19443">
    <property type="entry name" value="HEXOKINASE"/>
    <property type="match status" value="1"/>
</dbReference>
<dbReference type="PANTHER" id="PTHR19443:SF4">
    <property type="entry name" value="HEXOKINASE-2"/>
    <property type="match status" value="1"/>
</dbReference>
<dbReference type="Pfam" id="PF00349">
    <property type="entry name" value="Hexokinase_1"/>
    <property type="match status" value="2"/>
</dbReference>
<dbReference type="Pfam" id="PF03727">
    <property type="entry name" value="Hexokinase_2"/>
    <property type="match status" value="2"/>
</dbReference>
<dbReference type="PRINTS" id="PR00475">
    <property type="entry name" value="HEXOKINASE"/>
</dbReference>
<dbReference type="SUPFAM" id="SSF53067">
    <property type="entry name" value="Actin-like ATPase domain"/>
    <property type="match status" value="4"/>
</dbReference>
<dbReference type="PROSITE" id="PS00378">
    <property type="entry name" value="HEXOKINASE_1"/>
    <property type="match status" value="2"/>
</dbReference>
<dbReference type="PROSITE" id="PS51748">
    <property type="entry name" value="HEXOKINASE_2"/>
    <property type="match status" value="2"/>
</dbReference>
<keyword id="KW-0002">3D-structure</keyword>
<keyword id="KW-0007">Acetylation</keyword>
<keyword id="KW-0021">Allosteric enzyme</keyword>
<keyword id="KW-0067">ATP-binding</keyword>
<keyword id="KW-0963">Cytoplasm</keyword>
<keyword id="KW-0324">Glycolysis</keyword>
<keyword id="KW-0418">Kinase</keyword>
<keyword id="KW-0472">Membrane</keyword>
<keyword id="KW-0496">Mitochondrion</keyword>
<keyword id="KW-1000">Mitochondrion outer membrane</keyword>
<keyword id="KW-0547">Nucleotide-binding</keyword>
<keyword id="KW-1267">Proteomics identification</keyword>
<keyword id="KW-1185">Reference proteome</keyword>
<keyword id="KW-0677">Repeat</keyword>
<keyword id="KW-0808">Transferase</keyword>
<proteinExistence type="evidence at protein level"/>
<gene>
    <name evidence="19" type="primary">HK2</name>
</gene>
<organism>
    <name type="scientific">Homo sapiens</name>
    <name type="common">Human</name>
    <dbReference type="NCBI Taxonomy" id="9606"/>
    <lineage>
        <taxon>Eukaryota</taxon>
        <taxon>Metazoa</taxon>
        <taxon>Chordata</taxon>
        <taxon>Craniata</taxon>
        <taxon>Vertebrata</taxon>
        <taxon>Euteleostomi</taxon>
        <taxon>Mammalia</taxon>
        <taxon>Eutheria</taxon>
        <taxon>Euarchontoglires</taxon>
        <taxon>Primates</taxon>
        <taxon>Haplorrhini</taxon>
        <taxon>Catarrhini</taxon>
        <taxon>Hominidae</taxon>
        <taxon>Homo</taxon>
    </lineage>
</organism>
<accession>P52789</accession>
<accession>D6W5J2</accession>
<accession>Q8WU87</accession>
<accession>Q9UN82</accession>
<sequence>MIASHLLAYFFTELNHDQVQKVDQYLYHMRLSDETLLEISKRFRKEMEKGLGATTHPTAAVKMLPTFVRSTPDGTEHGEFLALDLGGTNFRVLWVKVTDNGLQKVEMENQIYAIPEDIMRGSGTQLFDHIAECLANFMDKLQIKDKKLPLGFTFSFPCHQTKLDESFLVSWTKGFKSSGVEGRDVVALIRKAIQRRGDFDIDIVAVVNDTVGTMMTCGYDDHNCEIGLIVGTGSNACYMEEMRHIDMVEGDEGRMCINMEWGAFGDDGSLNDIRTEFDQEIDMGSLNPGKQLFEKMISGMYMGELVRLILVKMAKEELLFGGKLSPELLNTGRFETKDISDIEGEKDGIRKAREVLMRLGLDPTQEDCVATHRICQIVSTRSASLCAATLAAVLQRIKENKGEERLRSTIGVDGSVYKKHPHFAKRLHKTVRRLVPGCDVRFLRSEDGSGKGAAMVTAVAYRLADQHRARQKTLEHLQLSHDQLLEVKRRMKVEMERGLSKETHASAPVKMLPTYVCATPDGTEKGDFLALDLGGTNFRVLLVRVRNGKWGGVEMHNKIYAIPQEVMHGTGDELFDHIVQCIADFLEYMGMKGVSLPLGFTFSFPCQQNSLDESILLKWTKGFKASGCEGEDVVTLLKEAIHRREEFDLDVVAVVNDTVGTMMTCGFEDPHCEVGLIVGTGSNACYMEEMRNVELVEGEEGRMCVNMEWGAFGDNGCLDDFRTEFDVAVDELSLNPGKQRFEKMISGMYLGEIVRNILIDFTKRGLLFRGRISERLKTRGIFETKFLSQIESDCLALLQVRAILQHLGLESTCDDSIIVKEVCTVVARRAAQLCGAGMAAVVDRIRENRGLDALKVTVGVDGTLYKLHPHFAKVMHETVKDLAPKCDVSFLQSEDGSGKGAALITAVACRIREAGQR</sequence>
<feature type="chain" id="PRO_0000197587" description="Hexokinase-2">
    <location>
        <begin position="1"/>
        <end position="917"/>
    </location>
</feature>
<feature type="domain" description="Hexokinase 1" evidence="3">
    <location>
        <begin position="16"/>
        <end position="458"/>
    </location>
</feature>
<feature type="domain" description="Hexokinase 2" evidence="3">
    <location>
        <begin position="464"/>
        <end position="906"/>
    </location>
</feature>
<feature type="region of interest" description="Mitochondrial-binding peptide (MBP)" evidence="14">
    <location>
        <begin position="1"/>
        <end position="16"/>
    </location>
</feature>
<feature type="region of interest" description="Hexokinase small subdomain 1" evidence="3">
    <location>
        <begin position="73"/>
        <end position="207"/>
    </location>
</feature>
<feature type="region of interest" description="Hexokinase large subdomain 1" evidence="3">
    <location>
        <begin position="208"/>
        <end position="447"/>
    </location>
</feature>
<feature type="region of interest" description="Hexokinase small subdomain 2" evidence="3">
    <location>
        <begin position="521"/>
        <end position="655"/>
    </location>
</feature>
<feature type="region of interest" description="Hexokinase large subdomain 2" evidence="3">
    <location>
        <begin position="656"/>
        <end position="895"/>
    </location>
</feature>
<feature type="binding site" evidence="1">
    <location>
        <position position="30"/>
    </location>
    <ligand>
        <name>ATP</name>
        <dbReference type="ChEBI" id="CHEBI:30616"/>
        <label>1</label>
    </ligand>
</feature>
<feature type="binding site" evidence="1">
    <location>
        <begin position="84"/>
        <end position="89"/>
    </location>
    <ligand>
        <name>ATP</name>
        <dbReference type="ChEBI" id="CHEBI:30616"/>
        <label>1</label>
    </ligand>
</feature>
<feature type="binding site" evidence="7 20">
    <location>
        <begin position="84"/>
        <end position="88"/>
    </location>
    <ligand>
        <name>D-glucose 6-phosphate</name>
        <dbReference type="ChEBI" id="CHEBI:61548"/>
        <label>1</label>
    </ligand>
</feature>
<feature type="binding site" evidence="7 20">
    <location>
        <begin position="155"/>
        <end position="156"/>
    </location>
    <ligand>
        <name>D-glucose</name>
        <dbReference type="ChEBI" id="CHEBI:4167"/>
        <label>1</label>
    </ligand>
</feature>
<feature type="binding site" evidence="7 20">
    <location>
        <begin position="172"/>
        <end position="173"/>
    </location>
    <ligand>
        <name>D-glucose</name>
        <dbReference type="ChEBI" id="CHEBI:4167"/>
        <label>1</label>
    </ligand>
</feature>
<feature type="binding site" evidence="7 20">
    <location>
        <begin position="208"/>
        <end position="209"/>
    </location>
    <ligand>
        <name>D-glucose</name>
        <dbReference type="ChEBI" id="CHEBI:4167"/>
        <label>1</label>
    </ligand>
</feature>
<feature type="binding site" evidence="7 20">
    <location>
        <position position="209"/>
    </location>
    <ligand>
        <name>D-glucose 6-phosphate</name>
        <dbReference type="ChEBI" id="CHEBI:61548"/>
        <label>1</label>
    </ligand>
</feature>
<feature type="binding site" evidence="7 20">
    <location>
        <position position="232"/>
    </location>
    <ligand>
        <name>D-glucose 6-phosphate</name>
        <dbReference type="ChEBI" id="CHEBI:61548"/>
        <label>1</label>
    </ligand>
</feature>
<feature type="binding site" evidence="7 20">
    <location>
        <position position="235"/>
    </location>
    <ligand>
        <name>D-glucose</name>
        <dbReference type="ChEBI" id="CHEBI:4167"/>
        <label>1</label>
    </ligand>
</feature>
<feature type="binding site" evidence="7 20">
    <location>
        <position position="260"/>
    </location>
    <ligand>
        <name>D-glucose</name>
        <dbReference type="ChEBI" id="CHEBI:4167"/>
        <label>1</label>
    </ligand>
</feature>
<feature type="binding site" evidence="7 20">
    <location>
        <begin position="291"/>
        <end position="294"/>
    </location>
    <ligand>
        <name>D-glucose</name>
        <dbReference type="ChEBI" id="CHEBI:4167"/>
        <label>1</label>
    </ligand>
</feature>
<feature type="binding site" evidence="7 20">
    <location>
        <begin position="413"/>
        <end position="415"/>
    </location>
    <ligand>
        <name>D-glucose 6-phosphate</name>
        <dbReference type="ChEBI" id="CHEBI:61548"/>
        <label>1</label>
    </ligand>
</feature>
<feature type="binding site" evidence="1">
    <location>
        <begin position="425"/>
        <end position="426"/>
    </location>
    <ligand>
        <name>ATP</name>
        <dbReference type="ChEBI" id="CHEBI:30616"/>
        <label>1</label>
    </ligand>
</feature>
<feature type="binding site" evidence="7 20">
    <location>
        <position position="449"/>
    </location>
    <ligand>
        <name>D-glucose 6-phosphate</name>
        <dbReference type="ChEBI" id="CHEBI:61548"/>
        <label>1</label>
    </ligand>
</feature>
<feature type="binding site" evidence="1">
    <location>
        <begin position="532"/>
        <end position="537"/>
    </location>
    <ligand>
        <name>ATP</name>
        <dbReference type="ChEBI" id="CHEBI:30616"/>
        <label>2</label>
    </ligand>
</feature>
<feature type="binding site" evidence="6 7 20 23">
    <location>
        <begin position="532"/>
        <end position="536"/>
    </location>
    <ligand>
        <name>D-glucose 6-phosphate</name>
        <dbReference type="ChEBI" id="CHEBI:61548"/>
        <label>2</label>
    </ligand>
</feature>
<feature type="binding site" evidence="7 20">
    <location>
        <begin position="603"/>
        <end position="604"/>
    </location>
    <ligand>
        <name>D-glucose</name>
        <dbReference type="ChEBI" id="CHEBI:4167"/>
        <label>2</label>
    </ligand>
</feature>
<feature type="binding site" evidence="7 20">
    <location>
        <begin position="620"/>
        <end position="621"/>
    </location>
    <ligand>
        <name>D-glucose</name>
        <dbReference type="ChEBI" id="CHEBI:4167"/>
        <label>2</label>
    </ligand>
</feature>
<feature type="binding site" evidence="7 20">
    <location>
        <begin position="656"/>
        <end position="657"/>
    </location>
    <ligand>
        <name>D-glucose</name>
        <dbReference type="ChEBI" id="CHEBI:4167"/>
        <label>2</label>
    </ligand>
</feature>
<feature type="binding site" evidence="6 7 20 23">
    <location>
        <position position="657"/>
    </location>
    <ligand>
        <name>D-glucose 6-phosphate</name>
        <dbReference type="ChEBI" id="CHEBI:61548"/>
        <label>2</label>
    </ligand>
</feature>
<feature type="binding site" evidence="1">
    <location>
        <position position="680"/>
    </location>
    <ligand>
        <name>ATP</name>
        <dbReference type="ChEBI" id="CHEBI:30616"/>
        <label>2</label>
    </ligand>
</feature>
<feature type="binding site" evidence="6 7 20 23">
    <location>
        <position position="680"/>
    </location>
    <ligand>
        <name>D-glucose 6-phosphate</name>
        <dbReference type="ChEBI" id="CHEBI:61548"/>
        <label>2</label>
    </ligand>
</feature>
<feature type="binding site" evidence="7 20">
    <location>
        <begin position="682"/>
        <end position="683"/>
    </location>
    <ligand>
        <name>D-glucose</name>
        <dbReference type="ChEBI" id="CHEBI:4167"/>
        <label>2</label>
    </ligand>
</feature>
<feature type="binding site" evidence="7 20">
    <location>
        <position position="708"/>
    </location>
    <ligand>
        <name>D-glucose</name>
        <dbReference type="ChEBI" id="CHEBI:4167"/>
        <label>2</label>
    </ligand>
</feature>
<feature type="binding site" evidence="7 20">
    <location>
        <begin position="739"/>
        <end position="742"/>
    </location>
    <ligand>
        <name>D-glucose</name>
        <dbReference type="ChEBI" id="CHEBI:4167"/>
        <label>2</label>
    </ligand>
</feature>
<feature type="binding site" evidence="1">
    <location>
        <begin position="747"/>
        <end position="748"/>
    </location>
    <ligand>
        <name>ATP</name>
        <dbReference type="ChEBI" id="CHEBI:30616"/>
        <label>2</label>
    </ligand>
</feature>
<feature type="binding site" evidence="1">
    <location>
        <begin position="784"/>
        <end position="788"/>
    </location>
    <ligand>
        <name>ATP</name>
        <dbReference type="ChEBI" id="CHEBI:30616"/>
        <label>2</label>
    </ligand>
</feature>
<feature type="binding site" evidence="6 7 20 23">
    <location>
        <begin position="861"/>
        <end position="863"/>
    </location>
    <ligand>
        <name>D-glucose 6-phosphate</name>
        <dbReference type="ChEBI" id="CHEBI:61548"/>
        <label>2</label>
    </ligand>
</feature>
<feature type="binding site" evidence="1">
    <location>
        <begin position="863"/>
        <end position="867"/>
    </location>
    <ligand>
        <name>ATP</name>
        <dbReference type="ChEBI" id="CHEBI:30616"/>
        <label>2</label>
    </ligand>
</feature>
<feature type="binding site" evidence="6 7 20 23">
    <location>
        <position position="897"/>
    </location>
    <ligand>
        <name>D-glucose 6-phosphate</name>
        <dbReference type="ChEBI" id="CHEBI:61548"/>
        <label>2</label>
    </ligand>
</feature>
<feature type="modified residue" description="N-acetylmethionine" evidence="24">
    <location>
        <position position="1"/>
    </location>
</feature>
<feature type="sequence variant" id="VAR_003691" description="Does not affect activity; dbSNP:rs2229621." evidence="9 10 12 13">
    <original>Q</original>
    <variation>H</variation>
    <location>
        <position position="142"/>
    </location>
</feature>
<feature type="sequence variant" id="VAR_010577" evidence="10">
    <original>L</original>
    <variation>F</variation>
    <location>
        <position position="148"/>
    </location>
</feature>
<feature type="sequence variant" id="VAR_020504" description="In dbSNP:rs28363006." evidence="13">
    <original>R</original>
    <variation>C</variation>
    <location>
        <position position="274"/>
    </location>
</feature>
<feature type="sequence variant" id="VAR_020505" description="In dbSNP:rs28363015." evidence="13">
    <original>A</original>
    <variation>P</variation>
    <location>
        <position position="314"/>
    </location>
</feature>
<feature type="sequence variant" id="VAR_010578" evidence="8">
    <original>A</original>
    <variation>V</variation>
    <location>
        <position position="314"/>
    </location>
</feature>
<feature type="sequence variant" id="VAR_020506" description="In dbSNP:rs28363016." evidence="13">
    <original>T</original>
    <variation>I</variation>
    <location>
        <position position="331"/>
    </location>
</feature>
<feature type="sequence variant" id="VAR_010579" description="In dbSNP:rs61748096." evidence="8">
    <original>R</original>
    <variation>C</variation>
    <location>
        <position position="353"/>
    </location>
</feature>
<feature type="sequence variant" id="VAR_020507" description="In dbSNP:rs28363029." evidence="13">
    <original>A</original>
    <variation>S</variation>
    <location>
        <position position="387"/>
    </location>
</feature>
<feature type="sequence variant" id="VAR_010580" description="In dbSNP:rs145124653." evidence="10">
    <original>R</original>
    <variation>Q</variation>
    <location>
        <position position="497"/>
    </location>
</feature>
<feature type="sequence variant" id="VAR_010581" description="In dbSNP:rs185927605." evidence="8">
    <original>R</original>
    <variation>Q</variation>
    <location>
        <position position="775"/>
    </location>
</feature>
<feature type="sequence variant" id="VAR_020508" description="In dbSNP:rs28363057." evidence="13">
    <original>R</original>
    <variation>Q</variation>
    <location>
        <position position="801"/>
    </location>
</feature>
<feature type="sequence variant" id="VAR_010582" description="In dbSNP:rs2229629." evidence="10 13">
    <original>R</original>
    <variation>K</variation>
    <location>
        <position position="844"/>
    </location>
</feature>
<feature type="sequence variant" id="VAR_020509" description="In dbSNP:rs28363065." evidence="13">
    <original>D</original>
    <variation>N</variation>
    <location>
        <position position="881"/>
    </location>
</feature>
<feature type="mutagenesis site" description="Decreased hexokinase activity." evidence="7">
    <original>D</original>
    <variation>A</variation>
    <location>
        <position position="209"/>
    </location>
</feature>
<feature type="mutagenesis site" description="Induces a rapid dissociation of D-glucose." evidence="7">
    <original>R</original>
    <variation>A</variation>
    <location>
        <position position="468"/>
    </location>
</feature>
<feature type="mutagenesis site" description="Decreased hexokinase activity." evidence="7">
    <original>D</original>
    <variation>A</variation>
    <location>
        <position position="657"/>
    </location>
</feature>
<feature type="sequence conflict" description="In Ref. 1; CAA86511." evidence="17" ref="1">
    <original>I</original>
    <variation>T</variation>
    <location>
        <position position="803"/>
    </location>
</feature>
<feature type="sequence conflict" description="In Ref. 2; CAA86476." evidence="17" ref="2">
    <location>
        <position position="870"/>
    </location>
</feature>
<feature type="helix" evidence="25">
    <location>
        <begin position="19"/>
        <end position="25"/>
    </location>
</feature>
<feature type="helix" evidence="25">
    <location>
        <begin position="27"/>
        <end position="29"/>
    </location>
</feature>
<feature type="helix" evidence="25">
    <location>
        <begin position="33"/>
        <end position="51"/>
    </location>
</feature>
<feature type="turn" evidence="25">
    <location>
        <begin position="53"/>
        <end position="55"/>
    </location>
</feature>
<feature type="helix" evidence="25">
    <location>
        <begin position="56"/>
        <end position="58"/>
    </location>
</feature>
<feature type="strand" evidence="25">
    <location>
        <begin position="78"/>
        <end position="97"/>
    </location>
</feature>
<feature type="strand" evidence="26">
    <location>
        <begin position="100"/>
        <end position="102"/>
    </location>
</feature>
<feature type="strand" evidence="25">
    <location>
        <begin position="106"/>
        <end position="112"/>
    </location>
</feature>
<feature type="helix" evidence="25">
    <location>
        <begin position="116"/>
        <end position="119"/>
    </location>
</feature>
<feature type="helix" evidence="25">
    <location>
        <begin position="123"/>
        <end position="141"/>
    </location>
</feature>
<feature type="helix" evidence="28">
    <location>
        <begin position="143"/>
        <end position="145"/>
    </location>
</feature>
<feature type="strand" evidence="25">
    <location>
        <begin position="148"/>
        <end position="154"/>
    </location>
</feature>
<feature type="strand" evidence="26">
    <location>
        <begin position="161"/>
        <end position="164"/>
    </location>
</feature>
<feature type="strand" evidence="27">
    <location>
        <begin position="165"/>
        <end position="168"/>
    </location>
</feature>
<feature type="helix" evidence="25">
    <location>
        <begin position="185"/>
        <end position="194"/>
    </location>
</feature>
<feature type="strand" evidence="25">
    <location>
        <begin position="201"/>
        <end position="207"/>
    </location>
</feature>
<feature type="helix" evidence="25">
    <location>
        <begin position="209"/>
        <end position="218"/>
    </location>
</feature>
<feature type="strand" evidence="25">
    <location>
        <begin position="224"/>
        <end position="241"/>
    </location>
</feature>
<feature type="helix" evidence="25">
    <location>
        <begin position="242"/>
        <end position="244"/>
    </location>
</feature>
<feature type="strand" evidence="25">
    <location>
        <begin position="252"/>
        <end position="258"/>
    </location>
</feature>
<feature type="helix" evidence="25">
    <location>
        <begin position="261"/>
        <end position="263"/>
    </location>
</feature>
<feature type="turn" evidence="25">
    <location>
        <begin position="264"/>
        <end position="267"/>
    </location>
</feature>
<feature type="turn" evidence="25">
    <location>
        <begin position="269"/>
        <end position="273"/>
    </location>
</feature>
<feature type="helix" evidence="25">
    <location>
        <begin position="276"/>
        <end position="283"/>
    </location>
</feature>
<feature type="strand" evidence="25">
    <location>
        <begin position="285"/>
        <end position="287"/>
    </location>
</feature>
<feature type="helix" evidence="25">
    <location>
        <begin position="292"/>
        <end position="295"/>
    </location>
</feature>
<feature type="turn" evidence="25">
    <location>
        <begin position="299"/>
        <end position="301"/>
    </location>
</feature>
<feature type="helix" evidence="25">
    <location>
        <begin position="302"/>
        <end position="315"/>
    </location>
</feature>
<feature type="helix" evidence="25">
    <location>
        <begin position="320"/>
        <end position="322"/>
    </location>
</feature>
<feature type="helix" evidence="25">
    <location>
        <begin position="326"/>
        <end position="329"/>
    </location>
</feature>
<feature type="helix" evidence="25">
    <location>
        <begin position="336"/>
        <end position="344"/>
    </location>
</feature>
<feature type="strand" evidence="25">
    <location>
        <begin position="345"/>
        <end position="347"/>
    </location>
</feature>
<feature type="helix" evidence="25">
    <location>
        <begin position="348"/>
        <end position="358"/>
    </location>
</feature>
<feature type="helix" evidence="25">
    <location>
        <begin position="365"/>
        <end position="401"/>
    </location>
</feature>
<feature type="strand" evidence="25">
    <location>
        <begin position="404"/>
        <end position="413"/>
    </location>
</feature>
<feature type="helix" evidence="25">
    <location>
        <begin position="415"/>
        <end position="419"/>
    </location>
</feature>
<feature type="strand" evidence="25">
    <location>
        <begin position="420"/>
        <end position="422"/>
    </location>
</feature>
<feature type="helix" evidence="25">
    <location>
        <begin position="423"/>
        <end position="434"/>
    </location>
</feature>
<feature type="strand" evidence="25">
    <location>
        <begin position="438"/>
        <end position="444"/>
    </location>
</feature>
<feature type="helix" evidence="25">
    <location>
        <begin position="449"/>
        <end position="474"/>
    </location>
</feature>
<feature type="helix" evidence="25">
    <location>
        <begin position="475"/>
        <end position="477"/>
    </location>
</feature>
<feature type="helix" evidence="25">
    <location>
        <begin position="481"/>
        <end position="499"/>
    </location>
</feature>
<feature type="helix" evidence="25">
    <location>
        <begin position="501"/>
        <end position="504"/>
    </location>
</feature>
<feature type="strand" evidence="25">
    <location>
        <begin position="527"/>
        <end position="536"/>
    </location>
</feature>
<feature type="strand" evidence="25">
    <location>
        <begin position="539"/>
        <end position="545"/>
    </location>
</feature>
<feature type="strand" evidence="26">
    <location>
        <begin position="548"/>
        <end position="550"/>
    </location>
</feature>
<feature type="strand" evidence="25">
    <location>
        <begin position="553"/>
        <end position="559"/>
    </location>
</feature>
<feature type="helix" evidence="25">
    <location>
        <begin position="564"/>
        <end position="568"/>
    </location>
</feature>
<feature type="helix" evidence="25">
    <location>
        <begin position="571"/>
        <end position="588"/>
    </location>
</feature>
<feature type="strand" evidence="25">
    <location>
        <begin position="597"/>
        <end position="602"/>
    </location>
</feature>
<feature type="strand" evidence="25">
    <location>
        <begin position="606"/>
        <end position="610"/>
    </location>
</feature>
<feature type="strand" evidence="25">
    <location>
        <begin position="613"/>
        <end position="616"/>
    </location>
</feature>
<feature type="helix" evidence="25">
    <location>
        <begin position="633"/>
        <end position="642"/>
    </location>
</feature>
<feature type="strand" evidence="25">
    <location>
        <begin position="650"/>
        <end position="655"/>
    </location>
</feature>
<feature type="helix" evidence="25">
    <location>
        <begin position="657"/>
        <end position="666"/>
    </location>
</feature>
<feature type="strand" evidence="25">
    <location>
        <begin position="672"/>
        <end position="689"/>
    </location>
</feature>
<feature type="turn" evidence="25">
    <location>
        <begin position="690"/>
        <end position="692"/>
    </location>
</feature>
<feature type="strand" evidence="25">
    <location>
        <begin position="699"/>
        <end position="706"/>
    </location>
</feature>
<feature type="helix" evidence="25">
    <location>
        <begin position="709"/>
        <end position="711"/>
    </location>
</feature>
<feature type="turn" evidence="25">
    <location>
        <begin position="712"/>
        <end position="715"/>
    </location>
</feature>
<feature type="turn" evidence="25">
    <location>
        <begin position="717"/>
        <end position="721"/>
    </location>
</feature>
<feature type="helix" evidence="25">
    <location>
        <begin position="724"/>
        <end position="731"/>
    </location>
</feature>
<feature type="strand" evidence="25">
    <location>
        <begin position="733"/>
        <end position="735"/>
    </location>
</feature>
<feature type="helix" evidence="25">
    <location>
        <begin position="742"/>
        <end position="744"/>
    </location>
</feature>
<feature type="turn" evidence="25">
    <location>
        <begin position="747"/>
        <end position="749"/>
    </location>
</feature>
<feature type="helix" evidence="25">
    <location>
        <begin position="750"/>
        <end position="763"/>
    </location>
</feature>
<feature type="helix" evidence="25">
    <location>
        <begin position="768"/>
        <end position="770"/>
    </location>
</feature>
<feature type="turn" evidence="25">
    <location>
        <begin position="774"/>
        <end position="776"/>
    </location>
</feature>
<feature type="helix" evidence="25">
    <location>
        <begin position="785"/>
        <end position="788"/>
    </location>
</feature>
<feature type="turn" evidence="25">
    <location>
        <begin position="789"/>
        <end position="791"/>
    </location>
</feature>
<feature type="helix" evidence="25">
    <location>
        <begin position="797"/>
        <end position="806"/>
    </location>
</feature>
<feature type="helix" evidence="25">
    <location>
        <begin position="813"/>
        <end position="848"/>
    </location>
</feature>
<feature type="strand" evidence="25">
    <location>
        <begin position="852"/>
        <end position="861"/>
    </location>
</feature>
<feature type="helix" evidence="25">
    <location>
        <begin position="863"/>
        <end position="867"/>
    </location>
</feature>
<feature type="strand" evidence="28">
    <location>
        <begin position="868"/>
        <end position="870"/>
    </location>
</feature>
<feature type="helix" evidence="25">
    <location>
        <begin position="871"/>
        <end position="882"/>
    </location>
</feature>
<feature type="strand" evidence="25">
    <location>
        <begin position="886"/>
        <end position="892"/>
    </location>
</feature>
<feature type="helix" evidence="25">
    <location>
        <begin position="897"/>
        <end position="911"/>
    </location>
</feature>
<comment type="function">
    <text evidence="4 5 6 7">Catalyzes the phosphorylation of hexose, such as D-glucose and D-fructose, to hexose 6-phosphate (D-glucose 6-phosphate and D-fructose 6-phosphate, respectively) (PubMed:23185017, PubMed:26985301, PubMed:29298880). Mediates the initial step of glycolysis by catalyzing phosphorylation of D-glucose to D-glucose 6-phosphate (PubMed:29298880). Plays a key role in maintaining the integrity of the outer mitochondrial membrane by preventing the release of apoptogenic molecules from the intermembrane space and subsequent apoptosis (PubMed:18350175).</text>
</comment>
<comment type="catalytic activity">
    <reaction evidence="5 6 7">
        <text>a D-hexose + ATP = a D-hexose 6-phosphate + ADP + H(+)</text>
        <dbReference type="Rhea" id="RHEA:22740"/>
        <dbReference type="ChEBI" id="CHEBI:4194"/>
        <dbReference type="ChEBI" id="CHEBI:15378"/>
        <dbReference type="ChEBI" id="CHEBI:30616"/>
        <dbReference type="ChEBI" id="CHEBI:229467"/>
        <dbReference type="ChEBI" id="CHEBI:456216"/>
        <dbReference type="EC" id="2.7.1.1"/>
    </reaction>
    <physiologicalReaction direction="left-to-right" evidence="5 7">
        <dbReference type="Rhea" id="RHEA:22741"/>
    </physiologicalReaction>
</comment>
<comment type="catalytic activity">
    <reaction evidence="2">
        <text>D-fructose + ATP = D-fructose 6-phosphate + ADP + H(+)</text>
        <dbReference type="Rhea" id="RHEA:16125"/>
        <dbReference type="ChEBI" id="CHEBI:15378"/>
        <dbReference type="ChEBI" id="CHEBI:30616"/>
        <dbReference type="ChEBI" id="CHEBI:37721"/>
        <dbReference type="ChEBI" id="CHEBI:61527"/>
        <dbReference type="ChEBI" id="CHEBI:456216"/>
        <dbReference type="EC" id="2.7.1.1"/>
    </reaction>
    <physiologicalReaction direction="left-to-right" evidence="2">
        <dbReference type="Rhea" id="RHEA:16126"/>
    </physiologicalReaction>
</comment>
<comment type="catalytic activity">
    <reaction evidence="7">
        <text>D-glucose + ATP = D-glucose 6-phosphate + ADP + H(+)</text>
        <dbReference type="Rhea" id="RHEA:17825"/>
        <dbReference type="ChEBI" id="CHEBI:4167"/>
        <dbReference type="ChEBI" id="CHEBI:15378"/>
        <dbReference type="ChEBI" id="CHEBI:30616"/>
        <dbReference type="ChEBI" id="CHEBI:61548"/>
        <dbReference type="ChEBI" id="CHEBI:456216"/>
        <dbReference type="EC" id="2.7.1.1"/>
    </reaction>
    <physiologicalReaction direction="left-to-right" evidence="7">
        <dbReference type="Rhea" id="RHEA:17826"/>
    </physiologicalReaction>
</comment>
<comment type="activity regulation">
    <text evidence="6">Hexokinase activity is specifically inhibited by 2,6-disubstituted glucosamines.</text>
</comment>
<comment type="biophysicochemical properties">
    <kinetics>
        <KM evidence="7">0.21 mM for D-glucose</KM>
        <KM evidence="7">1.13 mM for ATP</KM>
    </kinetics>
</comment>
<comment type="pathway">
    <text evidence="18">Carbohydrate metabolism; hexose metabolism.</text>
</comment>
<comment type="pathway">
    <text evidence="18">Carbohydrate degradation; glycolysis; D-glyceraldehyde 3-phosphate and glycerone phosphate from D-glucose: step 1/4.</text>
</comment>
<comment type="subunit">
    <text evidence="1 5">Monomer (By similarity). Interacts with TIGAR; the interaction increases hexokinase activity in a hypoxia- and HIF1A-dependent manner (PubMed:23185017).</text>
</comment>
<comment type="interaction">
    <interactant intactId="EBI-741469">
        <id>P52789</id>
    </interactant>
    <interactant intactId="EBI-749530">
        <id>P43365</id>
        <label>MAGEA12</label>
    </interactant>
    <organismsDiffer>false</organismsDiffer>
    <experiments>3</experiments>
</comment>
<comment type="interaction">
    <interactant intactId="EBI-741469">
        <id>P52789</id>
    </interactant>
    <interactant intactId="EBI-3920747">
        <id>Q9NQ88</id>
        <label>TIGAR</label>
    </interactant>
    <organismsDiffer>false</organismsDiffer>
    <experiments>3</experiments>
</comment>
<comment type="interaction">
    <interactant intactId="EBI-741469">
        <id>P52789</id>
    </interactant>
    <interactant intactId="EBI-741480">
        <id>Q9UMX0</id>
        <label>UBQLN1</label>
    </interactant>
    <organismsDiffer>false</organismsDiffer>
    <experiments>4</experiments>
</comment>
<comment type="interaction">
    <interactant intactId="EBI-741469">
        <id>P52789</id>
    </interactant>
    <interactant intactId="EBI-10173939">
        <id>Q9UMX0-2</id>
        <label>UBQLN1</label>
    </interactant>
    <organismsDiffer>false</organismsDiffer>
    <experiments>3</experiments>
</comment>
<comment type="interaction">
    <interactant intactId="EBI-741469">
        <id>P52789</id>
    </interactant>
    <interactant intactId="EBI-298680">
        <id>P05480</id>
        <label>Src</label>
    </interactant>
    <organismsDiffer>true</organismsDiffer>
    <experiments>4</experiments>
</comment>
<comment type="subcellular location">
    <subcellularLocation>
        <location evidence="4">Mitochondrion outer membrane</location>
        <topology evidence="17">Peripheral membrane protein</topology>
    </subcellularLocation>
    <subcellularLocation>
        <location evidence="4">Cytoplasm</location>
        <location evidence="4">Cytosol</location>
    </subcellularLocation>
    <text evidence="4 7">The mitochondrial-binding peptide (MBP) region promotes association with the mitochondrial outer membrane (PubMed:29298880). The interaction with the mitochondrial outer membrane via the mitochondrial-binding peptide (MBP) region promotes higher stability of the protein (PubMed:29298880). Release from the mitochondrial outer membrane into the cytosol induces permeability transition pore (PTP) opening and apoptosis (PubMed:18350175).</text>
</comment>
<comment type="tissue specificity">
    <text evidence="11">Predominant hexokinase isozyme expressed in insulin-responsive tissues such as skeletal muscle.</text>
</comment>
<comment type="domain">
    <text evidence="7">The N- and C-terminal halves of the protein contain a hexokinase domain (PubMed:29298880). In contrast to hexokinase-1 and -3 (HK1 and HK3, respectively), both hexokinase domains display catalytic activity (PubMed:29298880). The region connecting the two hexokinase domains is required for the catalytic activity of the N-terminal hexokinase domain (PubMed:29298880). The N-terminal half regulates stability of the whole enzyme (PubMed:29298880).</text>
</comment>
<comment type="polymorphism">
    <text evidence="9 10">Although found in NIDDM patients, genetic variations of HK2 do not contribute to the disease (PubMed:7883122, PubMed:7883123).</text>
</comment>
<comment type="similarity">
    <text evidence="3 17">Belongs to the hexokinase family.</text>
</comment>
<comment type="caution">
    <text evidence="1 6 7">Hexokinase is known to act as a monomer in normal conditions (By similarity). It however homodimerizes at elevated protein concentrations used for crystallizations (PubMed:26985301, PubMed:29298880).</text>
</comment>
<comment type="online information" name="Wikipedia">
    <link uri="https://en.wikipedia.org/wiki/Hexokinase"/>
    <text>Hexokinase entry</text>
</comment>
<name>HXK2_HUMAN</name>